<feature type="chain" id="PRO_0000235575" description="Aspartate--tRNA(Asp/Asn) ligase">
    <location>
        <begin position="1"/>
        <end position="596"/>
    </location>
</feature>
<feature type="region of interest" description="Aspartate" evidence="1">
    <location>
        <begin position="197"/>
        <end position="200"/>
    </location>
</feature>
<feature type="binding site" evidence="1">
    <location>
        <position position="173"/>
    </location>
    <ligand>
        <name>L-aspartate</name>
        <dbReference type="ChEBI" id="CHEBI:29991"/>
    </ligand>
</feature>
<feature type="binding site" evidence="1">
    <location>
        <begin position="219"/>
        <end position="221"/>
    </location>
    <ligand>
        <name>ATP</name>
        <dbReference type="ChEBI" id="CHEBI:30616"/>
    </ligand>
</feature>
<feature type="binding site" evidence="1">
    <location>
        <position position="219"/>
    </location>
    <ligand>
        <name>L-aspartate</name>
        <dbReference type="ChEBI" id="CHEBI:29991"/>
    </ligand>
</feature>
<feature type="binding site" evidence="1">
    <location>
        <position position="228"/>
    </location>
    <ligand>
        <name>ATP</name>
        <dbReference type="ChEBI" id="CHEBI:30616"/>
    </ligand>
</feature>
<feature type="binding site" evidence="1">
    <location>
        <position position="450"/>
    </location>
    <ligand>
        <name>L-aspartate</name>
        <dbReference type="ChEBI" id="CHEBI:29991"/>
    </ligand>
</feature>
<feature type="binding site" evidence="1">
    <location>
        <position position="485"/>
    </location>
    <ligand>
        <name>ATP</name>
        <dbReference type="ChEBI" id="CHEBI:30616"/>
    </ligand>
</feature>
<feature type="binding site" evidence="1">
    <location>
        <position position="492"/>
    </location>
    <ligand>
        <name>L-aspartate</name>
        <dbReference type="ChEBI" id="CHEBI:29991"/>
    </ligand>
</feature>
<feature type="binding site" evidence="1">
    <location>
        <begin position="537"/>
        <end position="540"/>
    </location>
    <ligand>
        <name>ATP</name>
        <dbReference type="ChEBI" id="CHEBI:30616"/>
    </ligand>
</feature>
<feature type="site" description="Important for tRNA non-discrimination" evidence="1">
    <location>
        <position position="31"/>
    </location>
</feature>
<name>SYDND_HYDCU</name>
<reference key="1">
    <citation type="journal article" date="2006" name="PLoS Biol.">
        <title>The genome of deep-sea vent chemolithoautotroph Thiomicrospira crunogena XCL-2.</title>
        <authorList>
            <person name="Scott K.M."/>
            <person name="Sievert S.M."/>
            <person name="Abril F.N."/>
            <person name="Ball L.A."/>
            <person name="Barrett C.J."/>
            <person name="Blake R.A."/>
            <person name="Boller A.J."/>
            <person name="Chain P.S.G."/>
            <person name="Clark J.A."/>
            <person name="Davis C.R."/>
            <person name="Detter C."/>
            <person name="Do K.F."/>
            <person name="Dobrinski K.P."/>
            <person name="Faza B.I."/>
            <person name="Fitzpatrick K.A."/>
            <person name="Freyermuth S.K."/>
            <person name="Harmer T.L."/>
            <person name="Hauser L.J."/>
            <person name="Huegler M."/>
            <person name="Kerfeld C.A."/>
            <person name="Klotz M.G."/>
            <person name="Kong W.W."/>
            <person name="Land M."/>
            <person name="Lapidus A."/>
            <person name="Larimer F.W."/>
            <person name="Longo D.L."/>
            <person name="Lucas S."/>
            <person name="Malfatti S.A."/>
            <person name="Massey S.E."/>
            <person name="Martin D.D."/>
            <person name="McCuddin Z."/>
            <person name="Meyer F."/>
            <person name="Moore J.L."/>
            <person name="Ocampo L.H. Jr."/>
            <person name="Paul J.H."/>
            <person name="Paulsen I.T."/>
            <person name="Reep D.K."/>
            <person name="Ren Q."/>
            <person name="Ross R.L."/>
            <person name="Sato P.Y."/>
            <person name="Thomas P."/>
            <person name="Tinkham L.E."/>
            <person name="Zeruth G.T."/>
        </authorList>
    </citation>
    <scope>NUCLEOTIDE SEQUENCE [LARGE SCALE GENOMIC DNA]</scope>
    <source>
        <strain>DSM 25203 / XCL-2</strain>
    </source>
</reference>
<gene>
    <name evidence="1" type="primary">aspS</name>
    <name type="ordered locus">Tcr_0890</name>
</gene>
<protein>
    <recommendedName>
        <fullName evidence="1">Aspartate--tRNA(Asp/Asn) ligase</fullName>
        <ecNumber evidence="1">6.1.1.23</ecNumber>
    </recommendedName>
    <alternativeName>
        <fullName evidence="1">Aspartyl-tRNA synthetase</fullName>
        <shortName evidence="1">AspRS</shortName>
    </alternativeName>
    <alternativeName>
        <fullName evidence="1">Non-discriminating aspartyl-tRNA synthetase</fullName>
        <shortName evidence="1">ND-AspRS</shortName>
    </alternativeName>
</protein>
<accession>Q31H87</accession>
<keyword id="KW-0030">Aminoacyl-tRNA synthetase</keyword>
<keyword id="KW-0067">ATP-binding</keyword>
<keyword id="KW-0963">Cytoplasm</keyword>
<keyword id="KW-0436">Ligase</keyword>
<keyword id="KW-0547">Nucleotide-binding</keyword>
<keyword id="KW-0648">Protein biosynthesis</keyword>
<organism>
    <name type="scientific">Hydrogenovibrio crunogenus (strain DSM 25203 / XCL-2)</name>
    <name type="common">Thiomicrospira crunogena</name>
    <dbReference type="NCBI Taxonomy" id="317025"/>
    <lineage>
        <taxon>Bacteria</taxon>
        <taxon>Pseudomonadati</taxon>
        <taxon>Pseudomonadota</taxon>
        <taxon>Gammaproteobacteria</taxon>
        <taxon>Thiotrichales</taxon>
        <taxon>Piscirickettsiaceae</taxon>
        <taxon>Hydrogenovibrio</taxon>
    </lineage>
</organism>
<dbReference type="EC" id="6.1.1.23" evidence="1"/>
<dbReference type="EMBL" id="CP000109">
    <property type="protein sequence ID" value="ABB41486.1"/>
    <property type="molecule type" value="Genomic_DNA"/>
</dbReference>
<dbReference type="SMR" id="Q31H87"/>
<dbReference type="STRING" id="317025.Tcr_0890"/>
<dbReference type="KEGG" id="tcx:Tcr_0890"/>
<dbReference type="eggNOG" id="COG0173">
    <property type="taxonomic scope" value="Bacteria"/>
</dbReference>
<dbReference type="HOGENOM" id="CLU_014330_3_2_6"/>
<dbReference type="OrthoDB" id="9802326at2"/>
<dbReference type="GO" id="GO:0005737">
    <property type="term" value="C:cytoplasm"/>
    <property type="evidence" value="ECO:0007669"/>
    <property type="project" value="UniProtKB-SubCell"/>
</dbReference>
<dbReference type="GO" id="GO:0004815">
    <property type="term" value="F:aspartate-tRNA ligase activity"/>
    <property type="evidence" value="ECO:0007669"/>
    <property type="project" value="UniProtKB-UniRule"/>
</dbReference>
<dbReference type="GO" id="GO:0050560">
    <property type="term" value="F:aspartate-tRNA(Asn) ligase activity"/>
    <property type="evidence" value="ECO:0007669"/>
    <property type="project" value="UniProtKB-EC"/>
</dbReference>
<dbReference type="GO" id="GO:0005524">
    <property type="term" value="F:ATP binding"/>
    <property type="evidence" value="ECO:0007669"/>
    <property type="project" value="UniProtKB-UniRule"/>
</dbReference>
<dbReference type="GO" id="GO:0003676">
    <property type="term" value="F:nucleic acid binding"/>
    <property type="evidence" value="ECO:0007669"/>
    <property type="project" value="InterPro"/>
</dbReference>
<dbReference type="GO" id="GO:0006422">
    <property type="term" value="P:aspartyl-tRNA aminoacylation"/>
    <property type="evidence" value="ECO:0007669"/>
    <property type="project" value="UniProtKB-UniRule"/>
</dbReference>
<dbReference type="CDD" id="cd00777">
    <property type="entry name" value="AspRS_core"/>
    <property type="match status" value="1"/>
</dbReference>
<dbReference type="CDD" id="cd04317">
    <property type="entry name" value="EcAspRS_like_N"/>
    <property type="match status" value="1"/>
</dbReference>
<dbReference type="Gene3D" id="3.30.930.10">
    <property type="entry name" value="Bira Bifunctional Protein, Domain 2"/>
    <property type="match status" value="1"/>
</dbReference>
<dbReference type="Gene3D" id="3.30.1360.30">
    <property type="entry name" value="GAD-like domain"/>
    <property type="match status" value="1"/>
</dbReference>
<dbReference type="Gene3D" id="2.40.50.140">
    <property type="entry name" value="Nucleic acid-binding proteins"/>
    <property type="match status" value="1"/>
</dbReference>
<dbReference type="HAMAP" id="MF_00044">
    <property type="entry name" value="Asp_tRNA_synth_type1"/>
    <property type="match status" value="1"/>
</dbReference>
<dbReference type="InterPro" id="IPR004364">
    <property type="entry name" value="Aa-tRNA-synt_II"/>
</dbReference>
<dbReference type="InterPro" id="IPR006195">
    <property type="entry name" value="aa-tRNA-synth_II"/>
</dbReference>
<dbReference type="InterPro" id="IPR045864">
    <property type="entry name" value="aa-tRNA-synth_II/BPL/LPL"/>
</dbReference>
<dbReference type="InterPro" id="IPR004524">
    <property type="entry name" value="Asp-tRNA-ligase_1"/>
</dbReference>
<dbReference type="InterPro" id="IPR047089">
    <property type="entry name" value="Asp-tRNA-ligase_1_N"/>
</dbReference>
<dbReference type="InterPro" id="IPR002312">
    <property type="entry name" value="Asp/Asn-tRNA-synth_IIb"/>
</dbReference>
<dbReference type="InterPro" id="IPR047090">
    <property type="entry name" value="AspRS_core"/>
</dbReference>
<dbReference type="InterPro" id="IPR004115">
    <property type="entry name" value="GAD-like_sf"/>
</dbReference>
<dbReference type="InterPro" id="IPR029351">
    <property type="entry name" value="GAD_dom"/>
</dbReference>
<dbReference type="InterPro" id="IPR012340">
    <property type="entry name" value="NA-bd_OB-fold"/>
</dbReference>
<dbReference type="InterPro" id="IPR004365">
    <property type="entry name" value="NA-bd_OB_tRNA"/>
</dbReference>
<dbReference type="NCBIfam" id="TIGR00459">
    <property type="entry name" value="aspS_bact"/>
    <property type="match status" value="1"/>
</dbReference>
<dbReference type="NCBIfam" id="NF001750">
    <property type="entry name" value="PRK00476.1"/>
    <property type="match status" value="1"/>
</dbReference>
<dbReference type="PANTHER" id="PTHR22594:SF5">
    <property type="entry name" value="ASPARTATE--TRNA LIGASE, MITOCHONDRIAL"/>
    <property type="match status" value="1"/>
</dbReference>
<dbReference type="PANTHER" id="PTHR22594">
    <property type="entry name" value="ASPARTYL/LYSYL-TRNA SYNTHETASE"/>
    <property type="match status" value="1"/>
</dbReference>
<dbReference type="Pfam" id="PF02938">
    <property type="entry name" value="GAD"/>
    <property type="match status" value="1"/>
</dbReference>
<dbReference type="Pfam" id="PF00152">
    <property type="entry name" value="tRNA-synt_2"/>
    <property type="match status" value="1"/>
</dbReference>
<dbReference type="Pfam" id="PF01336">
    <property type="entry name" value="tRNA_anti-codon"/>
    <property type="match status" value="1"/>
</dbReference>
<dbReference type="PRINTS" id="PR01042">
    <property type="entry name" value="TRNASYNTHASP"/>
</dbReference>
<dbReference type="SUPFAM" id="SSF55681">
    <property type="entry name" value="Class II aaRS and biotin synthetases"/>
    <property type="match status" value="1"/>
</dbReference>
<dbReference type="SUPFAM" id="SSF55261">
    <property type="entry name" value="GAD domain-like"/>
    <property type="match status" value="1"/>
</dbReference>
<dbReference type="SUPFAM" id="SSF50249">
    <property type="entry name" value="Nucleic acid-binding proteins"/>
    <property type="match status" value="1"/>
</dbReference>
<dbReference type="PROSITE" id="PS50862">
    <property type="entry name" value="AA_TRNA_LIGASE_II"/>
    <property type="match status" value="1"/>
</dbReference>
<proteinExistence type="inferred from homology"/>
<evidence type="ECO:0000255" key="1">
    <source>
        <dbReference type="HAMAP-Rule" id="MF_00044"/>
    </source>
</evidence>
<comment type="function">
    <text evidence="1">Aspartyl-tRNA synthetase with relaxed tRNA specificity since it is able to aspartylate not only its cognate tRNA(Asp) but also tRNA(Asn). Reaction proceeds in two steps: L-aspartate is first activated by ATP to form Asp-AMP and then transferred to the acceptor end of tRNA(Asp/Asn).</text>
</comment>
<comment type="catalytic activity">
    <reaction evidence="1">
        <text>tRNA(Asx) + L-aspartate + ATP = L-aspartyl-tRNA(Asx) + AMP + diphosphate</text>
        <dbReference type="Rhea" id="RHEA:18349"/>
        <dbReference type="Rhea" id="RHEA-COMP:9710"/>
        <dbReference type="Rhea" id="RHEA-COMP:9711"/>
        <dbReference type="ChEBI" id="CHEBI:29991"/>
        <dbReference type="ChEBI" id="CHEBI:30616"/>
        <dbReference type="ChEBI" id="CHEBI:33019"/>
        <dbReference type="ChEBI" id="CHEBI:78442"/>
        <dbReference type="ChEBI" id="CHEBI:78516"/>
        <dbReference type="ChEBI" id="CHEBI:456215"/>
        <dbReference type="EC" id="6.1.1.23"/>
    </reaction>
</comment>
<comment type="subunit">
    <text evidence="1">Homodimer.</text>
</comment>
<comment type="subcellular location">
    <subcellularLocation>
        <location evidence="1">Cytoplasm</location>
    </subcellularLocation>
</comment>
<comment type="similarity">
    <text evidence="1">Belongs to the class-II aminoacyl-tRNA synthetase family. Type 1 subfamily.</text>
</comment>
<sequence length="596" mass="67745">MMRTHYCGQVTEILENQQVTVSGWVHRRRDHGGVIFIDLRDREGLVQVVVNPDNAEMFAIAERVRSEYVLKVEGKVCARTPETINPKMNTGKIEIVAESLEVLSSAEPIPFQLDDKHISEEVRLTYRYLDLRREEMQSTMRTRYRVTRSMRRYLDDNGFMDMETPILTKSTPEGARDYLVPSRTHPNKFFALPQSPQLFKQLLMMSGFDRYYQITRCFRDEDLRADRQPEFTQLDIETSFMTEEEVMNMMEGLTKTIFREGVDVNFEDDFPRMTYAEAIEKYGIDRPDLRIPLQLVDVADLLQDIDFKVFAGPAKDPMGRVAALRVPQGGKLSRKEIDDYTKYVGIYGAKGLAYIKVNDLSAGLDGLQSPIVKFFPDQAMEIMQRVGAEDGDIVFFGADNAKIVNEALGALRCKIGEDLDMIEKEWAPVWVVDFPMFEMDEKTAKMTAIHHPFTQPKATTEEILNHDEPHQMLSRAYDLVINGIEVGGGSVRIHDTHMQAAVLKMLGISDEDAQEKFGFLLNALKYGCPPHAGMAFGLDRLVMLMAKRDSIRDVIAFPKTQSAACMLTDAPGNVDNTQLADLELRFRKSLVAKDAS</sequence>